<reference key="1">
    <citation type="journal article" date="1998" name="J. Mol. Biol.">
        <title>Genome structure of mycobacteriophage D29: implications for phage evolution.</title>
        <authorList>
            <person name="Ford M.E."/>
            <person name="Sarkis G.J."/>
            <person name="Belanger A.E."/>
            <person name="Hendrix R.W."/>
            <person name="Hatfull G.F."/>
        </authorList>
    </citation>
    <scope>NUCLEOTIDE SEQUENCE [LARGE SCALE GENOMIC DNA]</scope>
</reference>
<sequence length="65" mass="7364">MKKGTKVIVQRDETKYPARGTWRWFRGKKGVVVTGLIGGDEYGVSFSKGDSADAYFKAYELTERK</sequence>
<organism>
    <name type="scientific">Mycobacterium phage D29</name>
    <name type="common">Mycobacteriophage D29</name>
    <dbReference type="NCBI Taxonomy" id="28369"/>
    <lineage>
        <taxon>Viruses</taxon>
        <taxon>Duplodnaviria</taxon>
        <taxon>Heunggongvirae</taxon>
        <taxon>Uroviricota</taxon>
        <taxon>Caudoviricetes</taxon>
        <taxon>Fromanvirus</taxon>
    </lineage>
</organism>
<feature type="chain" id="PRO_0000164776" description="Gene 51 protein">
    <location>
        <begin position="1"/>
        <end position="65"/>
    </location>
</feature>
<accession>O64241</accession>
<proteinExistence type="predicted"/>
<name>VG51_BPMD2</name>
<protein>
    <recommendedName>
        <fullName>Gene 51 protein</fullName>
    </recommendedName>
    <alternativeName>
        <fullName>Gp51</fullName>
    </alternativeName>
</protein>
<keyword id="KW-1185">Reference proteome</keyword>
<gene>
    <name type="primary">51</name>
</gene>
<organismHost>
    <name type="scientific">Mycobacterium</name>
    <dbReference type="NCBI Taxonomy" id="1763"/>
</organismHost>
<dbReference type="EMBL" id="AF022214">
    <property type="protein sequence ID" value="AAC18491.1"/>
    <property type="molecule type" value="Genomic_DNA"/>
</dbReference>
<dbReference type="PIR" id="H72805">
    <property type="entry name" value="H72805"/>
</dbReference>
<dbReference type="RefSeq" id="NP_046866.1">
    <property type="nucleotide sequence ID" value="NC_001900.1"/>
</dbReference>
<dbReference type="SMR" id="O64241"/>
<dbReference type="GeneID" id="1261593"/>
<dbReference type="KEGG" id="vg:1261593"/>
<dbReference type="OrthoDB" id="23652at10239"/>
<dbReference type="Proteomes" id="UP000002131">
    <property type="component" value="Segment"/>
</dbReference>